<evidence type="ECO:0000255" key="1"/>
<evidence type="ECO:0000256" key="2">
    <source>
        <dbReference type="SAM" id="MobiDB-lite"/>
    </source>
</evidence>
<evidence type="ECO:0000305" key="3"/>
<gene>
    <name type="ordered locus">At2g38370</name>
    <name type="ORF">T19C21.14</name>
</gene>
<organism>
    <name type="scientific">Arabidopsis thaliana</name>
    <name type="common">Mouse-ear cress</name>
    <dbReference type="NCBI Taxonomy" id="3702"/>
    <lineage>
        <taxon>Eukaryota</taxon>
        <taxon>Viridiplantae</taxon>
        <taxon>Streptophyta</taxon>
        <taxon>Embryophyta</taxon>
        <taxon>Tracheophyta</taxon>
        <taxon>Spermatophyta</taxon>
        <taxon>Magnoliopsida</taxon>
        <taxon>eudicotyledons</taxon>
        <taxon>Gunneridae</taxon>
        <taxon>Pentapetalae</taxon>
        <taxon>rosids</taxon>
        <taxon>malvids</taxon>
        <taxon>Brassicales</taxon>
        <taxon>Brassicaceae</taxon>
        <taxon>Camelineae</taxon>
        <taxon>Arabidopsis</taxon>
    </lineage>
</organism>
<accession>F4ISY0</accession>
<accession>O80914</accession>
<keyword id="KW-0175">Coiled coil</keyword>
<keyword id="KW-1185">Reference proteome</keyword>
<reference key="1">
    <citation type="journal article" date="1999" name="Nature">
        <title>Sequence and analysis of chromosome 2 of the plant Arabidopsis thaliana.</title>
        <authorList>
            <person name="Lin X."/>
            <person name="Kaul S."/>
            <person name="Rounsley S.D."/>
            <person name="Shea T.P."/>
            <person name="Benito M.-I."/>
            <person name="Town C.D."/>
            <person name="Fujii C.Y."/>
            <person name="Mason T.M."/>
            <person name="Bowman C.L."/>
            <person name="Barnstead M.E."/>
            <person name="Feldblyum T.V."/>
            <person name="Buell C.R."/>
            <person name="Ketchum K.A."/>
            <person name="Lee J.J."/>
            <person name="Ronning C.M."/>
            <person name="Koo H.L."/>
            <person name="Moffat K.S."/>
            <person name="Cronin L.A."/>
            <person name="Shen M."/>
            <person name="Pai G."/>
            <person name="Van Aken S."/>
            <person name="Umayam L."/>
            <person name="Tallon L.J."/>
            <person name="Gill J.E."/>
            <person name="Adams M.D."/>
            <person name="Carrera A.J."/>
            <person name="Creasy T.H."/>
            <person name="Goodman H.M."/>
            <person name="Somerville C.R."/>
            <person name="Copenhaver G.P."/>
            <person name="Preuss D."/>
            <person name="Nierman W.C."/>
            <person name="White O."/>
            <person name="Eisen J.A."/>
            <person name="Salzberg S.L."/>
            <person name="Fraser C.M."/>
            <person name="Venter J.C."/>
        </authorList>
    </citation>
    <scope>NUCLEOTIDE SEQUENCE [LARGE SCALE GENOMIC DNA]</scope>
    <source>
        <strain>cv. Columbia</strain>
    </source>
</reference>
<reference key="2">
    <citation type="journal article" date="2017" name="Plant J.">
        <title>Araport11: a complete reannotation of the Arabidopsis thaliana reference genome.</title>
        <authorList>
            <person name="Cheng C.Y."/>
            <person name="Krishnakumar V."/>
            <person name="Chan A.P."/>
            <person name="Thibaud-Nissen F."/>
            <person name="Schobel S."/>
            <person name="Town C.D."/>
        </authorList>
    </citation>
    <scope>GENOME REANNOTATION</scope>
    <source>
        <strain>cv. Columbia</strain>
    </source>
</reference>
<reference key="3">
    <citation type="journal article" date="2003" name="Science">
        <title>Empirical analysis of transcriptional activity in the Arabidopsis genome.</title>
        <authorList>
            <person name="Yamada K."/>
            <person name="Lim J."/>
            <person name="Dale J.M."/>
            <person name="Chen H."/>
            <person name="Shinn P."/>
            <person name="Palm C.J."/>
            <person name="Southwick A.M."/>
            <person name="Wu H.C."/>
            <person name="Kim C.J."/>
            <person name="Nguyen M."/>
            <person name="Pham P.K."/>
            <person name="Cheuk R.F."/>
            <person name="Karlin-Newmann G."/>
            <person name="Liu S.X."/>
            <person name="Lam B."/>
            <person name="Sakano H."/>
            <person name="Wu T."/>
            <person name="Yu G."/>
            <person name="Miranda M."/>
            <person name="Quach H.L."/>
            <person name="Tripp M."/>
            <person name="Chang C.H."/>
            <person name="Lee J.M."/>
            <person name="Toriumi M.J."/>
            <person name="Chan M.M."/>
            <person name="Tang C.C."/>
            <person name="Onodera C.S."/>
            <person name="Deng J.M."/>
            <person name="Akiyama K."/>
            <person name="Ansari Y."/>
            <person name="Arakawa T."/>
            <person name="Banh J."/>
            <person name="Banno F."/>
            <person name="Bowser L."/>
            <person name="Brooks S.Y."/>
            <person name="Carninci P."/>
            <person name="Chao Q."/>
            <person name="Choy N."/>
            <person name="Enju A."/>
            <person name="Goldsmith A.D."/>
            <person name="Gurjal M."/>
            <person name="Hansen N.F."/>
            <person name="Hayashizaki Y."/>
            <person name="Johnson-Hopson C."/>
            <person name="Hsuan V.W."/>
            <person name="Iida K."/>
            <person name="Karnes M."/>
            <person name="Khan S."/>
            <person name="Koesema E."/>
            <person name="Ishida J."/>
            <person name="Jiang P.X."/>
            <person name="Jones T."/>
            <person name="Kawai J."/>
            <person name="Kamiya A."/>
            <person name="Meyers C."/>
            <person name="Nakajima M."/>
            <person name="Narusaka M."/>
            <person name="Seki M."/>
            <person name="Sakurai T."/>
            <person name="Satou M."/>
            <person name="Tamse R."/>
            <person name="Vaysberg M."/>
            <person name="Wallender E.K."/>
            <person name="Wong C."/>
            <person name="Yamamura Y."/>
            <person name="Yuan S."/>
            <person name="Shinozaki K."/>
            <person name="Davis R.W."/>
            <person name="Theologis A."/>
            <person name="Ecker J.R."/>
        </authorList>
    </citation>
    <scope>NUCLEOTIDE SEQUENCE [LARGE SCALE MRNA]</scope>
    <source>
        <strain>cv. Columbia</strain>
    </source>
</reference>
<reference key="4">
    <citation type="submission" date="2006-07" db="EMBL/GenBank/DDBJ databases">
        <title>Large-scale analysis of RIKEN Arabidopsis full-length (RAFL) cDNAs.</title>
        <authorList>
            <person name="Totoki Y."/>
            <person name="Seki M."/>
            <person name="Ishida J."/>
            <person name="Nakajima M."/>
            <person name="Enju A."/>
            <person name="Kamiya A."/>
            <person name="Narusaka M."/>
            <person name="Shin-i T."/>
            <person name="Nakagawa M."/>
            <person name="Sakamoto N."/>
            <person name="Oishi K."/>
            <person name="Kohara Y."/>
            <person name="Kobayashi M."/>
            <person name="Toyoda A."/>
            <person name="Sakaki Y."/>
            <person name="Sakurai T."/>
            <person name="Iida K."/>
            <person name="Akiyama K."/>
            <person name="Satou M."/>
            <person name="Toyoda T."/>
            <person name="Konagaya A."/>
            <person name="Carninci P."/>
            <person name="Kawai J."/>
            <person name="Hayashizaki Y."/>
            <person name="Shinozaki K."/>
        </authorList>
    </citation>
    <scope>NUCLEOTIDE SEQUENCE [LARGE SCALE MRNA]</scope>
    <source>
        <strain>cv. Columbia</strain>
    </source>
</reference>
<protein>
    <recommendedName>
        <fullName>WEB family protein At2g38370</fullName>
    </recommendedName>
</protein>
<sequence>MAEFPEPGTVNPDSDLSNGRAEKPEIDTSAPFESVREAATRFGGFGFWRPSLNKLPDASQENIQEPDIMGLKAQAFELQRELIVKERETLEVLKELEATKATVLKLQQRNEAYEEDTLREEVDSHIKPAGVVLKDLSQAKMNLCKIASIRESVEQLKNKLNEERAALEKTRERLMEKSLKVFSLEEEEVRVRFAKEGQTGEKDLGMLNEVQRLSRQAQEVKKTGENAELEVVKAMAETESTRDKIRTAKIRLVAARKMKEAAREAEAVAIAEIEAVTGSMNVGKAEAVTISAEEYSVLARSARDAEEEARKRVEDAMSRVEEANVSKKDVLKKVDEAAQEIETSKRVLEEAVERVDAANASKIEAEEALRKWRSENGQRRRLSSSVNNTSKFKSRRETTTRLMDVNGLHLTYDVVDGSSSSSTVPVLKPTMSIGQILSKKLLLAEDSDMNVANERRKMSLGQMLAKNSSSDKTVSKRSEGKENEKRTKTRKRKSFGFAKISVLLNKESKNKKKKKKIALNLR</sequence>
<feature type="chain" id="PRO_0000414071" description="WEB family protein At2g38370">
    <location>
        <begin position="1"/>
        <end position="522"/>
    </location>
</feature>
<feature type="region of interest" description="Disordered" evidence="2">
    <location>
        <begin position="1"/>
        <end position="32"/>
    </location>
</feature>
<feature type="region of interest" description="Disordered" evidence="2">
    <location>
        <begin position="374"/>
        <end position="397"/>
    </location>
</feature>
<feature type="region of interest" description="Disordered" evidence="2">
    <location>
        <begin position="458"/>
        <end position="493"/>
    </location>
</feature>
<feature type="coiled-coil region" evidence="1">
    <location>
        <begin position="77"/>
        <end position="264"/>
    </location>
</feature>
<feature type="coiled-coil region" evidence="1">
    <location>
        <begin position="299"/>
        <end position="376"/>
    </location>
</feature>
<feature type="compositionally biased region" description="Basic and acidic residues" evidence="2">
    <location>
        <begin position="473"/>
        <end position="486"/>
    </location>
</feature>
<dbReference type="EMBL" id="AC004683">
    <property type="protein sequence ID" value="AAC28767.1"/>
    <property type="status" value="ALT_SEQ"/>
    <property type="molecule type" value="Genomic_DNA"/>
</dbReference>
<dbReference type="EMBL" id="CP002685">
    <property type="protein sequence ID" value="AEC09529.1"/>
    <property type="molecule type" value="Genomic_DNA"/>
</dbReference>
<dbReference type="EMBL" id="BT008635">
    <property type="status" value="NOT_ANNOTATED_CDS"/>
    <property type="molecule type" value="mRNA"/>
</dbReference>
<dbReference type="EMBL" id="AK229708">
    <property type="status" value="NOT_ANNOTATED_CDS"/>
    <property type="molecule type" value="mRNA"/>
</dbReference>
<dbReference type="PIR" id="T02508">
    <property type="entry name" value="T02508"/>
</dbReference>
<dbReference type="RefSeq" id="NP_001323454.1">
    <property type="nucleotide sequence ID" value="NM_001336697.1"/>
</dbReference>
<dbReference type="RefSeq" id="NP_181371.2">
    <property type="nucleotide sequence ID" value="NM_129393.5"/>
</dbReference>
<dbReference type="SMR" id="F4ISY0"/>
<dbReference type="FunCoup" id="F4ISY0">
    <property type="interactions" value="186"/>
</dbReference>
<dbReference type="STRING" id="3702.F4ISY0"/>
<dbReference type="PaxDb" id="3702-AT2G38370.1"/>
<dbReference type="ProteomicsDB" id="234591"/>
<dbReference type="EnsemblPlants" id="AT2G38370.1">
    <property type="protein sequence ID" value="AT2G38370.1"/>
    <property type="gene ID" value="AT2G38370"/>
</dbReference>
<dbReference type="GeneID" id="818418"/>
<dbReference type="Gramene" id="AT2G38370.1">
    <property type="protein sequence ID" value="AT2G38370.1"/>
    <property type="gene ID" value="AT2G38370"/>
</dbReference>
<dbReference type="KEGG" id="ath:AT2G38370"/>
<dbReference type="Araport" id="AT2G38370"/>
<dbReference type="TAIR" id="AT2G38370"/>
<dbReference type="eggNOG" id="ENOG502QSAB">
    <property type="taxonomic scope" value="Eukaryota"/>
</dbReference>
<dbReference type="HOGENOM" id="CLU_017338_2_0_1"/>
<dbReference type="InParanoid" id="F4ISY0"/>
<dbReference type="PRO" id="PR:F4ISY0"/>
<dbReference type="Proteomes" id="UP000006548">
    <property type="component" value="Chromosome 2"/>
</dbReference>
<dbReference type="ExpressionAtlas" id="F4ISY0">
    <property type="expression patterns" value="baseline and differential"/>
</dbReference>
<dbReference type="InterPro" id="IPR008545">
    <property type="entry name" value="Web"/>
</dbReference>
<dbReference type="PANTHER" id="PTHR32054">
    <property type="entry name" value="HEAVY CHAIN, PUTATIVE, EXPRESSED-RELATED-RELATED"/>
    <property type="match status" value="1"/>
</dbReference>
<dbReference type="PANTHER" id="PTHR32054:SF4">
    <property type="entry name" value="OS07G0677900 PROTEIN"/>
    <property type="match status" value="1"/>
</dbReference>
<dbReference type="Pfam" id="PF05701">
    <property type="entry name" value="WEMBL"/>
    <property type="match status" value="2"/>
</dbReference>
<proteinExistence type="evidence at transcript level"/>
<comment type="similarity">
    <text evidence="3">Belongs to the WEB family.</text>
</comment>
<comment type="sequence caution" evidence="3">
    <conflict type="erroneous gene model prediction">
        <sequence resource="EMBL-CDS" id="AAC28767"/>
    </conflict>
</comment>
<comment type="sequence caution" evidence="3">
    <conflict type="erroneous termination">
        <sequence resource="EMBL" id="AK229708"/>
    </conflict>
    <text>Truncated C-terminus.</text>
</comment>
<comment type="sequence caution" evidence="3">
    <conflict type="erroneous termination">
        <sequence resource="EMBL" id="BT008635"/>
    </conflict>
    <text>Truncated C-terminus.</text>
</comment>
<name>Y2837_ARATH</name>